<dbReference type="EMBL" id="AC004146">
    <property type="status" value="NOT_ANNOTATED_CDS"/>
    <property type="molecule type" value="Genomic_DNA"/>
</dbReference>
<dbReference type="EMBL" id="CP002684">
    <property type="protein sequence ID" value="AEE34599.1"/>
    <property type="status" value="ALT_SEQ"/>
    <property type="molecule type" value="Genomic_DNA"/>
</dbReference>
<dbReference type="EMBL" id="BT012027">
    <property type="status" value="NOT_ANNOTATED_CDS"/>
    <property type="molecule type" value="mRNA"/>
</dbReference>
<dbReference type="RefSeq" id="NP_176884.1">
    <property type="nucleotide sequence ID" value="NM_105383.1"/>
</dbReference>
<dbReference type="SMR" id="Q3ECH0"/>
<dbReference type="FunCoup" id="Q3ECH0">
    <property type="interactions" value="23"/>
</dbReference>
<dbReference type="STRING" id="3702.Q3ECH0"/>
<dbReference type="DNASU" id="843033"/>
<dbReference type="GeneID" id="843033"/>
<dbReference type="KEGG" id="ath:AT1G67130"/>
<dbReference type="Araport" id="AT1G67130"/>
<dbReference type="TAIR" id="AT1G67130"/>
<dbReference type="InParanoid" id="Q3ECH0"/>
<dbReference type="PRO" id="PR:Q3ECH0"/>
<dbReference type="Proteomes" id="UP000006548">
    <property type="component" value="Chromosome 1"/>
</dbReference>
<dbReference type="ExpressionAtlas" id="Q3ECH0">
    <property type="expression patterns" value="baseline and differential"/>
</dbReference>
<dbReference type="CDD" id="cd22157">
    <property type="entry name" value="F-box_AtFBW1-like"/>
    <property type="match status" value="1"/>
</dbReference>
<dbReference type="Gene3D" id="1.20.1280.50">
    <property type="match status" value="1"/>
</dbReference>
<dbReference type="InterPro" id="IPR013187">
    <property type="entry name" value="F-box-assoc_dom_typ3"/>
</dbReference>
<dbReference type="InterPro" id="IPR017451">
    <property type="entry name" value="F-box-assoc_interact_dom"/>
</dbReference>
<dbReference type="InterPro" id="IPR036047">
    <property type="entry name" value="F-box-like_dom_sf"/>
</dbReference>
<dbReference type="InterPro" id="IPR001810">
    <property type="entry name" value="F-box_dom"/>
</dbReference>
<dbReference type="NCBIfam" id="TIGR01640">
    <property type="entry name" value="F_box_assoc_1"/>
    <property type="match status" value="1"/>
</dbReference>
<dbReference type="PANTHER" id="PTHR31111">
    <property type="entry name" value="BNAA05G37150D PROTEIN-RELATED"/>
    <property type="match status" value="1"/>
</dbReference>
<dbReference type="PANTHER" id="PTHR31111:SF130">
    <property type="entry name" value="F-BOX ASSOCIATED UBIQUITINATION EFFECTOR FAMILY PROTEIN"/>
    <property type="match status" value="1"/>
</dbReference>
<dbReference type="Pfam" id="PF00646">
    <property type="entry name" value="F-box"/>
    <property type="match status" value="1"/>
</dbReference>
<dbReference type="Pfam" id="PF08268">
    <property type="entry name" value="FBA_3"/>
    <property type="match status" value="1"/>
</dbReference>
<dbReference type="SMART" id="SM00256">
    <property type="entry name" value="FBOX"/>
    <property type="match status" value="1"/>
</dbReference>
<dbReference type="SUPFAM" id="SSF81383">
    <property type="entry name" value="F-box domain"/>
    <property type="match status" value="1"/>
</dbReference>
<dbReference type="PROSITE" id="PS50181">
    <property type="entry name" value="FBOX"/>
    <property type="match status" value="1"/>
</dbReference>
<evidence type="ECO:0000255" key="1">
    <source>
        <dbReference type="PROSITE-ProRule" id="PRU00080"/>
    </source>
</evidence>
<evidence type="ECO:0000303" key="2">
    <source ref="3"/>
</evidence>
<evidence type="ECO:0000305" key="3"/>
<keyword id="KW-0025">Alternative splicing</keyword>
<keyword id="KW-1185">Reference proteome</keyword>
<reference key="1">
    <citation type="journal article" date="2000" name="Nature">
        <title>Sequence and analysis of chromosome 1 of the plant Arabidopsis thaliana.</title>
        <authorList>
            <person name="Theologis A."/>
            <person name="Ecker J.R."/>
            <person name="Palm C.J."/>
            <person name="Federspiel N.A."/>
            <person name="Kaul S."/>
            <person name="White O."/>
            <person name="Alonso J."/>
            <person name="Altafi H."/>
            <person name="Araujo R."/>
            <person name="Bowman C.L."/>
            <person name="Brooks S.Y."/>
            <person name="Buehler E."/>
            <person name="Chan A."/>
            <person name="Chao Q."/>
            <person name="Chen H."/>
            <person name="Cheuk R.F."/>
            <person name="Chin C.W."/>
            <person name="Chung M.K."/>
            <person name="Conn L."/>
            <person name="Conway A.B."/>
            <person name="Conway A.R."/>
            <person name="Creasy T.H."/>
            <person name="Dewar K."/>
            <person name="Dunn P."/>
            <person name="Etgu P."/>
            <person name="Feldblyum T.V."/>
            <person name="Feng J.-D."/>
            <person name="Fong B."/>
            <person name="Fujii C.Y."/>
            <person name="Gill J.E."/>
            <person name="Goldsmith A.D."/>
            <person name="Haas B."/>
            <person name="Hansen N.F."/>
            <person name="Hughes B."/>
            <person name="Huizar L."/>
            <person name="Hunter J.L."/>
            <person name="Jenkins J."/>
            <person name="Johnson-Hopson C."/>
            <person name="Khan S."/>
            <person name="Khaykin E."/>
            <person name="Kim C.J."/>
            <person name="Koo H.L."/>
            <person name="Kremenetskaia I."/>
            <person name="Kurtz D.B."/>
            <person name="Kwan A."/>
            <person name="Lam B."/>
            <person name="Langin-Hooper S."/>
            <person name="Lee A."/>
            <person name="Lee J.M."/>
            <person name="Lenz C.A."/>
            <person name="Li J.H."/>
            <person name="Li Y.-P."/>
            <person name="Lin X."/>
            <person name="Liu S.X."/>
            <person name="Liu Z.A."/>
            <person name="Luros J.S."/>
            <person name="Maiti R."/>
            <person name="Marziali A."/>
            <person name="Militscher J."/>
            <person name="Miranda M."/>
            <person name="Nguyen M."/>
            <person name="Nierman W.C."/>
            <person name="Osborne B.I."/>
            <person name="Pai G."/>
            <person name="Peterson J."/>
            <person name="Pham P.K."/>
            <person name="Rizzo M."/>
            <person name="Rooney T."/>
            <person name="Rowley D."/>
            <person name="Sakano H."/>
            <person name="Salzberg S.L."/>
            <person name="Schwartz J.R."/>
            <person name="Shinn P."/>
            <person name="Southwick A.M."/>
            <person name="Sun H."/>
            <person name="Tallon L.J."/>
            <person name="Tambunga G."/>
            <person name="Toriumi M.J."/>
            <person name="Town C.D."/>
            <person name="Utterback T."/>
            <person name="Van Aken S."/>
            <person name="Vaysberg M."/>
            <person name="Vysotskaia V.S."/>
            <person name="Walker M."/>
            <person name="Wu D."/>
            <person name="Yu G."/>
            <person name="Fraser C.M."/>
            <person name="Venter J.C."/>
            <person name="Davis R.W."/>
        </authorList>
    </citation>
    <scope>NUCLEOTIDE SEQUENCE [LARGE SCALE GENOMIC DNA]</scope>
    <source>
        <strain>cv. Columbia</strain>
    </source>
</reference>
<reference key="2">
    <citation type="journal article" date="2017" name="Plant J.">
        <title>Araport11: a complete reannotation of the Arabidopsis thaliana reference genome.</title>
        <authorList>
            <person name="Cheng C.Y."/>
            <person name="Krishnakumar V."/>
            <person name="Chan A.P."/>
            <person name="Thibaud-Nissen F."/>
            <person name="Schobel S."/>
            <person name="Town C.D."/>
        </authorList>
    </citation>
    <scope>GENOME REANNOTATION</scope>
    <source>
        <strain>cv. Columbia</strain>
    </source>
</reference>
<reference key="3">
    <citation type="submission" date="2004-09" db="EMBL/GenBank/DDBJ databases">
        <authorList>
            <consortium name="Center for eukaryotic structural genomics (CESG)"/>
        </authorList>
    </citation>
    <scope>NUCLEOTIDE SEQUENCE [LARGE SCALE MRNA] (ISOFORM 2)</scope>
    <source>
        <strain>cv. Columbia</strain>
    </source>
</reference>
<organism>
    <name type="scientific">Arabidopsis thaliana</name>
    <name type="common">Mouse-ear cress</name>
    <dbReference type="NCBI Taxonomy" id="3702"/>
    <lineage>
        <taxon>Eukaryota</taxon>
        <taxon>Viridiplantae</taxon>
        <taxon>Streptophyta</taxon>
        <taxon>Embryophyta</taxon>
        <taxon>Tracheophyta</taxon>
        <taxon>Spermatophyta</taxon>
        <taxon>Magnoliopsida</taxon>
        <taxon>eudicotyledons</taxon>
        <taxon>Gunneridae</taxon>
        <taxon>Pentapetalae</taxon>
        <taxon>rosids</taxon>
        <taxon>malvids</taxon>
        <taxon>Brassicales</taxon>
        <taxon>Brassicaceae</taxon>
        <taxon>Camelineae</taxon>
        <taxon>Arabidopsis</taxon>
    </lineage>
</organism>
<name>FB75_ARATH</name>
<feature type="chain" id="PRO_0000283348" description="F-box protein At1g67130">
    <location>
        <begin position="1"/>
        <end position="454"/>
    </location>
</feature>
<feature type="domain" description="F-box" evidence="1">
    <location>
        <begin position="4"/>
        <end position="53"/>
    </location>
</feature>
<feature type="splice variant" id="VSP_036628" description="In isoform 2." evidence="2">
    <original>VLNILDNHYILTLGTE</original>
    <variation>EKTLNGLAIIRESTSL</variation>
    <location>
        <begin position="169"/>
        <end position="184"/>
    </location>
</feature>
<feature type="splice variant" id="VSP_036629" description="In isoform 2." evidence="2">
    <location>
        <begin position="185"/>
        <end position="454"/>
    </location>
</feature>
<accession>Q3ECH0</accession>
<accession>F4HRR9</accession>
<sequence>MNRGETLDSIPTDLILDILSRLPTKSIARFHCVSKLWSSMLASQDFTRLFVNRSSSNPRLLLGIVRGGEWSFYSSPQPKNPYEKSSLEVAADFHMKLSEIKQHQHHGTSYAFGLIYLRTVWMSKEGNYEVCVICKPSTGQYYAILPPQPSGIFGDLGFDPIGKQFKVLVLNILDNHYILTLGTENDKWRSIQSSLRYRPCGQSPICINGVLYYIAYDTQDSSNDVIGCFDVRFEKFKFFHVNHDMVKCFFELINYKDKLGGFPLELSMWVLEDLEKEEWSKYAYTLKPDNNVVKVNYNLSFVGVTTRGEIVLAKMYACKPFYVFYYNPENNTLLSVEIQGVGEDSEWFSNYQRVYVFVEHVKDLHQFDNTKTSINLPEQKRKPTSISISSKYDDHVRTTLISSRKNQQVTTVSRPQQDRRTTNKFSALCLLVMKNSQVSKPDCFSWSSATMLYL</sequence>
<protein>
    <recommendedName>
        <fullName>F-box protein At1g67130</fullName>
    </recommendedName>
</protein>
<proteinExistence type="evidence at transcript level"/>
<gene>
    <name type="ordered locus">At1g67130</name>
    <name type="ORF">F5A8.14</name>
</gene>
<comment type="alternative products">
    <event type="alternative splicing"/>
    <isoform>
        <id>Q3ECH0-1</id>
        <name>1</name>
        <sequence type="displayed"/>
    </isoform>
    <isoform>
        <id>Q3ECH0-2</id>
        <name>2</name>
        <sequence type="described" ref="VSP_036628 VSP_036629"/>
    </isoform>
</comment>
<comment type="miscellaneous">
    <molecule>Isoform 2</molecule>
    <text evidence="3">Incomplete sequence.</text>
</comment>
<comment type="sequence caution" evidence="3">
    <conflict type="frameshift">
        <sequence resource="EMBL" id="AC004146"/>
    </conflict>
</comment>
<comment type="sequence caution" evidence="3">
    <conflict type="erroneous gene model prediction">
        <sequence resource="EMBL-CDS" id="AEE34599"/>
    </conflict>
</comment>
<comment type="sequence caution" evidence="3">
    <conflict type="frameshift">
        <sequence resource="EMBL" id="BT012027"/>
    </conflict>
</comment>